<organism>
    <name type="scientific">Caulobacter vibrioides (strain ATCC 19089 / CIP 103742 / CB 15)</name>
    <name type="common">Caulobacter crescentus</name>
    <dbReference type="NCBI Taxonomy" id="190650"/>
    <lineage>
        <taxon>Bacteria</taxon>
        <taxon>Pseudomonadati</taxon>
        <taxon>Pseudomonadota</taxon>
        <taxon>Alphaproteobacteria</taxon>
        <taxon>Caulobacterales</taxon>
        <taxon>Caulobacteraceae</taxon>
        <taxon>Caulobacter</taxon>
    </lineage>
</organism>
<evidence type="ECO:0000255" key="1">
    <source>
        <dbReference type="HAMAP-Rule" id="MF_00109"/>
    </source>
</evidence>
<dbReference type="EC" id="2.7.1.71" evidence="1"/>
<dbReference type="EMBL" id="AE005673">
    <property type="protein sequence ID" value="AAK24970.1"/>
    <property type="molecule type" value="Genomic_DNA"/>
</dbReference>
<dbReference type="PIR" id="F87621">
    <property type="entry name" value="F87621"/>
</dbReference>
<dbReference type="RefSeq" id="NP_421802.1">
    <property type="nucleotide sequence ID" value="NC_002696.2"/>
</dbReference>
<dbReference type="RefSeq" id="WP_010920844.1">
    <property type="nucleotide sequence ID" value="NC_002696.2"/>
</dbReference>
<dbReference type="SMR" id="Q9A435"/>
<dbReference type="STRING" id="190650.CC_3008"/>
<dbReference type="EnsemblBacteria" id="AAK24970">
    <property type="protein sequence ID" value="AAK24970"/>
    <property type="gene ID" value="CC_3008"/>
</dbReference>
<dbReference type="KEGG" id="ccr:CC_3008"/>
<dbReference type="PATRIC" id="fig|190650.5.peg.3014"/>
<dbReference type="eggNOG" id="COG0703">
    <property type="taxonomic scope" value="Bacteria"/>
</dbReference>
<dbReference type="HOGENOM" id="CLU_057607_2_0_5"/>
<dbReference type="BioCyc" id="CAULO:CC3008-MONOMER"/>
<dbReference type="UniPathway" id="UPA00053">
    <property type="reaction ID" value="UER00088"/>
</dbReference>
<dbReference type="Proteomes" id="UP000001816">
    <property type="component" value="Chromosome"/>
</dbReference>
<dbReference type="GO" id="GO:0005829">
    <property type="term" value="C:cytosol"/>
    <property type="evidence" value="ECO:0007669"/>
    <property type="project" value="TreeGrafter"/>
</dbReference>
<dbReference type="GO" id="GO:0005524">
    <property type="term" value="F:ATP binding"/>
    <property type="evidence" value="ECO:0007669"/>
    <property type="project" value="UniProtKB-UniRule"/>
</dbReference>
<dbReference type="GO" id="GO:0000287">
    <property type="term" value="F:magnesium ion binding"/>
    <property type="evidence" value="ECO:0007669"/>
    <property type="project" value="UniProtKB-UniRule"/>
</dbReference>
<dbReference type="GO" id="GO:0004765">
    <property type="term" value="F:shikimate kinase activity"/>
    <property type="evidence" value="ECO:0007669"/>
    <property type="project" value="UniProtKB-UniRule"/>
</dbReference>
<dbReference type="GO" id="GO:0008652">
    <property type="term" value="P:amino acid biosynthetic process"/>
    <property type="evidence" value="ECO:0007669"/>
    <property type="project" value="UniProtKB-KW"/>
</dbReference>
<dbReference type="GO" id="GO:0009073">
    <property type="term" value="P:aromatic amino acid family biosynthetic process"/>
    <property type="evidence" value="ECO:0007669"/>
    <property type="project" value="UniProtKB-KW"/>
</dbReference>
<dbReference type="GO" id="GO:0009423">
    <property type="term" value="P:chorismate biosynthetic process"/>
    <property type="evidence" value="ECO:0007669"/>
    <property type="project" value="UniProtKB-UniRule"/>
</dbReference>
<dbReference type="CDD" id="cd00464">
    <property type="entry name" value="SK"/>
    <property type="match status" value="1"/>
</dbReference>
<dbReference type="Gene3D" id="3.40.50.300">
    <property type="entry name" value="P-loop containing nucleotide triphosphate hydrolases"/>
    <property type="match status" value="1"/>
</dbReference>
<dbReference type="HAMAP" id="MF_00109">
    <property type="entry name" value="Shikimate_kinase"/>
    <property type="match status" value="1"/>
</dbReference>
<dbReference type="InterPro" id="IPR027417">
    <property type="entry name" value="P-loop_NTPase"/>
</dbReference>
<dbReference type="InterPro" id="IPR031322">
    <property type="entry name" value="Shikimate/glucono_kinase"/>
</dbReference>
<dbReference type="InterPro" id="IPR000623">
    <property type="entry name" value="Shikimate_kinase/TSH1"/>
</dbReference>
<dbReference type="InterPro" id="IPR023000">
    <property type="entry name" value="Shikimate_kinase_CS"/>
</dbReference>
<dbReference type="NCBIfam" id="NF010552">
    <property type="entry name" value="PRK13946.1"/>
    <property type="match status" value="1"/>
</dbReference>
<dbReference type="PANTHER" id="PTHR21087">
    <property type="entry name" value="SHIKIMATE KINASE"/>
    <property type="match status" value="1"/>
</dbReference>
<dbReference type="PANTHER" id="PTHR21087:SF16">
    <property type="entry name" value="SHIKIMATE KINASE 1, CHLOROPLASTIC"/>
    <property type="match status" value="1"/>
</dbReference>
<dbReference type="Pfam" id="PF01202">
    <property type="entry name" value="SKI"/>
    <property type="match status" value="1"/>
</dbReference>
<dbReference type="PRINTS" id="PR01100">
    <property type="entry name" value="SHIKIMTKNASE"/>
</dbReference>
<dbReference type="SUPFAM" id="SSF52540">
    <property type="entry name" value="P-loop containing nucleoside triphosphate hydrolases"/>
    <property type="match status" value="1"/>
</dbReference>
<dbReference type="PROSITE" id="PS01128">
    <property type="entry name" value="SHIKIMATE_KINASE"/>
    <property type="match status" value="1"/>
</dbReference>
<sequence>MTETDQTPDTAPEAAPEVAPIVSDDLAPLRAKTIVLVGLMGVGKSSVGRRLANVLGLPFRDADNEVEAAAGRSISEIFAELGEPAFRDGERRVIARLLDEPPHVLATGGGAFVNAETRALINEKAVSVWLKADVELLARRVSRKDNRPLVRGKDPVKVLTELAEARYPAYAEAQVHVETGDTPHMVAVEAILTALRQAHA</sequence>
<name>AROK_CAUVC</name>
<feature type="chain" id="PRO_0000237862" description="Shikimate kinase">
    <location>
        <begin position="1"/>
        <end position="200"/>
    </location>
</feature>
<feature type="binding site" evidence="1">
    <location>
        <begin position="41"/>
        <end position="46"/>
    </location>
    <ligand>
        <name>ATP</name>
        <dbReference type="ChEBI" id="CHEBI:30616"/>
    </ligand>
</feature>
<feature type="binding site" evidence="1">
    <location>
        <position position="45"/>
    </location>
    <ligand>
        <name>Mg(2+)</name>
        <dbReference type="ChEBI" id="CHEBI:18420"/>
    </ligand>
</feature>
<feature type="binding site" evidence="1">
    <location>
        <position position="63"/>
    </location>
    <ligand>
        <name>substrate</name>
    </ligand>
</feature>
<feature type="binding site" evidence="1">
    <location>
        <position position="87"/>
    </location>
    <ligand>
        <name>substrate</name>
    </ligand>
</feature>
<feature type="binding site" evidence="1">
    <location>
        <position position="109"/>
    </location>
    <ligand>
        <name>substrate</name>
    </ligand>
</feature>
<feature type="binding site" evidence="1">
    <location>
        <position position="147"/>
    </location>
    <ligand>
        <name>ATP</name>
        <dbReference type="ChEBI" id="CHEBI:30616"/>
    </ligand>
</feature>
<feature type="binding site" evidence="1">
    <location>
        <position position="166"/>
    </location>
    <ligand>
        <name>substrate</name>
    </ligand>
</feature>
<reference key="1">
    <citation type="journal article" date="2001" name="Proc. Natl. Acad. Sci. U.S.A.">
        <title>Complete genome sequence of Caulobacter crescentus.</title>
        <authorList>
            <person name="Nierman W.C."/>
            <person name="Feldblyum T.V."/>
            <person name="Laub M.T."/>
            <person name="Paulsen I.T."/>
            <person name="Nelson K.E."/>
            <person name="Eisen J.A."/>
            <person name="Heidelberg J.F."/>
            <person name="Alley M.R.K."/>
            <person name="Ohta N."/>
            <person name="Maddock J.R."/>
            <person name="Potocka I."/>
            <person name="Nelson W.C."/>
            <person name="Newton A."/>
            <person name="Stephens C."/>
            <person name="Phadke N.D."/>
            <person name="Ely B."/>
            <person name="DeBoy R.T."/>
            <person name="Dodson R.J."/>
            <person name="Durkin A.S."/>
            <person name="Gwinn M.L."/>
            <person name="Haft D.H."/>
            <person name="Kolonay J.F."/>
            <person name="Smit J."/>
            <person name="Craven M.B."/>
            <person name="Khouri H.M."/>
            <person name="Shetty J."/>
            <person name="Berry K.J."/>
            <person name="Utterback T.R."/>
            <person name="Tran K."/>
            <person name="Wolf A.M."/>
            <person name="Vamathevan J.J."/>
            <person name="Ermolaeva M.D."/>
            <person name="White O."/>
            <person name="Salzberg S.L."/>
            <person name="Venter J.C."/>
            <person name="Shapiro L."/>
            <person name="Fraser C.M."/>
        </authorList>
    </citation>
    <scope>NUCLEOTIDE SEQUENCE [LARGE SCALE GENOMIC DNA]</scope>
    <source>
        <strain>ATCC 19089 / CIP 103742 / CB 15</strain>
    </source>
</reference>
<gene>
    <name evidence="1" type="primary">aroK</name>
    <name type="ordered locus">CC_3008</name>
</gene>
<protein>
    <recommendedName>
        <fullName evidence="1">Shikimate kinase</fullName>
        <shortName evidence="1">SK</shortName>
        <ecNumber evidence="1">2.7.1.71</ecNumber>
    </recommendedName>
</protein>
<accession>Q9A435</accession>
<keyword id="KW-0028">Amino-acid biosynthesis</keyword>
<keyword id="KW-0057">Aromatic amino acid biosynthesis</keyword>
<keyword id="KW-0067">ATP-binding</keyword>
<keyword id="KW-0963">Cytoplasm</keyword>
<keyword id="KW-0418">Kinase</keyword>
<keyword id="KW-0460">Magnesium</keyword>
<keyword id="KW-0479">Metal-binding</keyword>
<keyword id="KW-0547">Nucleotide-binding</keyword>
<keyword id="KW-1185">Reference proteome</keyword>
<keyword id="KW-0808">Transferase</keyword>
<comment type="function">
    <text evidence="1">Catalyzes the specific phosphorylation of the 3-hydroxyl group of shikimic acid using ATP as a cosubstrate.</text>
</comment>
<comment type="catalytic activity">
    <reaction evidence="1">
        <text>shikimate + ATP = 3-phosphoshikimate + ADP + H(+)</text>
        <dbReference type="Rhea" id="RHEA:13121"/>
        <dbReference type="ChEBI" id="CHEBI:15378"/>
        <dbReference type="ChEBI" id="CHEBI:30616"/>
        <dbReference type="ChEBI" id="CHEBI:36208"/>
        <dbReference type="ChEBI" id="CHEBI:145989"/>
        <dbReference type="ChEBI" id="CHEBI:456216"/>
        <dbReference type="EC" id="2.7.1.71"/>
    </reaction>
</comment>
<comment type="cofactor">
    <cofactor evidence="1">
        <name>Mg(2+)</name>
        <dbReference type="ChEBI" id="CHEBI:18420"/>
    </cofactor>
    <text evidence="1">Binds 1 Mg(2+) ion per subunit.</text>
</comment>
<comment type="pathway">
    <text evidence="1">Metabolic intermediate biosynthesis; chorismate biosynthesis; chorismate from D-erythrose 4-phosphate and phosphoenolpyruvate: step 5/7.</text>
</comment>
<comment type="subunit">
    <text evidence="1">Monomer.</text>
</comment>
<comment type="subcellular location">
    <subcellularLocation>
        <location evidence="1">Cytoplasm</location>
    </subcellularLocation>
</comment>
<comment type="similarity">
    <text evidence="1">Belongs to the shikimate kinase family.</text>
</comment>
<proteinExistence type="inferred from homology"/>